<name>FBH1_PLEOS</name>
<reference key="1">
    <citation type="journal article" date="1998" name="Appl. Environ. Microbiol.">
        <title>Identification, characterization, and In situ detection of a fruit-body-specific hydrophobin of Pleurotus ostreatus.</title>
        <authorList>
            <person name="Penas M.M."/>
            <person name="Asgeirsdottir S.A."/>
            <person name="Lasa I."/>
            <person name="Culianez-Macia F.A."/>
            <person name="Pisabarro A.G."/>
            <person name="Wessels J.G."/>
            <person name="Ramirez L."/>
        </authorList>
    </citation>
    <scope>NUCLEOTIDE SEQUENCE [MRNA]</scope>
    <scope>IDENTIFICATION</scope>
    <scope>DEVELOPMENTAL STAGE</scope>
    <source>
        <strain>Florida</strain>
    </source>
</reference>
<reference key="2">
    <citation type="submission" date="2001-10" db="EMBL/GenBank/DDBJ databases">
        <title>Genomic analysis of fbh1, a gene coding for a fruit body-specific hydrophobin in the edible mushroom Pleurotus ostreatus.</title>
        <authorList>
            <person name="Penas M.M."/>
            <person name="Aranguren J."/>
            <person name="Larraya L.M."/>
            <person name="Culianez-Macia F.A."/>
            <person name="Ramirez L."/>
            <person name="Pisabarro A.G."/>
        </authorList>
    </citation>
    <scope>NUCLEOTIDE SEQUENCE [GENOMIC DNA]</scope>
    <source>
        <strain>N001</strain>
    </source>
</reference>
<reference key="3">
    <citation type="journal article" date="2004" name="Mycologia">
        <title>Structure of gene coding for the fruit body-specific hydrophobin Fbh1 of the edible basidiomycete Pleurotus ostreatus.</title>
        <authorList>
            <person name="Penas M.M."/>
            <person name="Aranguren J."/>
            <person name="Ramirez L."/>
            <person name="Pisabarro A.G."/>
        </authorList>
    </citation>
    <scope>NUCLEOTIDE SEQUENCE [GENOMIC DNA]</scope>
    <scope>IDENTIFICATION</scope>
    <source>
        <strain>N001</strain>
    </source>
</reference>
<reference key="4">
    <citation type="journal article" date="2021" name="Microbiol. Res.">
        <title>Identification of hydrophobin genes and their physiological functions related to growth and development in Pleurotus ostreatus.</title>
        <authorList>
            <person name="Xu D."/>
            <person name="Wang Y."/>
            <person name="Keerio A.A."/>
            <person name="Ma A."/>
        </authorList>
    </citation>
    <scope>FUNCTION</scope>
    <scope>DISRUPTION PHENOTYPE</scope>
    <scope>DEVELOPMENTAL STAGE</scope>
</reference>
<keyword id="KW-0134">Cell wall</keyword>
<keyword id="KW-1015">Disulfide bond</keyword>
<keyword id="KW-0964">Secreted</keyword>
<keyword id="KW-0732">Signal</keyword>
<sequence length="113" mass="11245">MFSIRIATVVLAASAALRPPARITNTETPVNQCGSGSIQCCESVQSASAAQAAGILGPLDILTNLQGLVGSHCSPLAAVGVSGTSCSSQTVCCKDVSKSGLVNLGCSPINLNL</sequence>
<dbReference type="EMBL" id="AJ004883">
    <property type="protein sequence ID" value="CAA06192.1"/>
    <property type="molecule type" value="mRNA"/>
</dbReference>
<dbReference type="EMBL" id="AJ416753">
    <property type="protein sequence ID" value="CAC95144.1"/>
    <property type="molecule type" value="Genomic_DNA"/>
</dbReference>
<dbReference type="EMBL" id="AJ319663">
    <property type="protein sequence ID" value="CAC40659.1"/>
    <property type="molecule type" value="Genomic_DNA"/>
</dbReference>
<dbReference type="VEuPathDB" id="FungiDB:PC9H_002673"/>
<dbReference type="VEuPathDB" id="FungiDB:PLEOSDRAFT_47325"/>
<dbReference type="GO" id="GO:0005576">
    <property type="term" value="C:extracellular region"/>
    <property type="evidence" value="ECO:0007669"/>
    <property type="project" value="UniProtKB-KW"/>
</dbReference>
<dbReference type="GO" id="GO:0009277">
    <property type="term" value="C:fungal-type cell wall"/>
    <property type="evidence" value="ECO:0007669"/>
    <property type="project" value="InterPro"/>
</dbReference>
<dbReference type="GO" id="GO:0005199">
    <property type="term" value="F:structural constituent of cell wall"/>
    <property type="evidence" value="ECO:0007669"/>
    <property type="project" value="InterPro"/>
</dbReference>
<dbReference type="CDD" id="cd23507">
    <property type="entry name" value="hydrophobin_I"/>
    <property type="match status" value="1"/>
</dbReference>
<dbReference type="InterPro" id="IPR001338">
    <property type="entry name" value="Hydrophobin"/>
</dbReference>
<dbReference type="Pfam" id="PF01185">
    <property type="entry name" value="Hydrophobin"/>
    <property type="match status" value="1"/>
</dbReference>
<dbReference type="SMART" id="SM00075">
    <property type="entry name" value="HYDRO"/>
    <property type="match status" value="1"/>
</dbReference>
<comment type="function">
    <text evidence="3 6">Aerial growth, conidiation, and dispersal of filamentous fungi in the environment rely upon a capability of their secreting small amphipathic proteins called hydrophobins (HPBs) with low sequence identity. Class I can self-assemble into an outermost layer of rodlet bundles on aerial cell surfaces, conferring cellular hydrophobicity that supports fungal growth, development and dispersal; whereas Class II form highly ordered films at water-air interfaces through intermolecular interactions but contribute nothing to the rodlet structure (Probable). Fbh1 is a fruiting body-specific class I hydrophobin that is involved in the growth rate and primordia formation (PubMed:33636611).</text>
</comment>
<comment type="subunit">
    <text evidence="1">Self-assembles to form functional amyloid fibrils called rodlets. Self-assembly into fibrillar rodlets occurs spontaneously at hydrophobic:hydrophilic interfaces and the rodlets further associate laterally to form amphipathic monolayers.</text>
</comment>
<comment type="subcellular location">
    <subcellularLocation>
        <location evidence="7">Secreted</location>
    </subcellularLocation>
    <subcellularLocation>
        <location evidence="7">Secreted</location>
        <location evidence="7">Cell wall</location>
    </subcellularLocation>
</comment>
<comment type="developmental stage">
    <text evidence="3 4">Expressed in fruiting bodies but absent in both monokaryotic and dikaryotic mycelia.</text>
</comment>
<comment type="disruption phenotype">
    <text evidence="3">Leads to retarded growth and displays denser aerial mycelia (PubMed:33636611). Slows down primordia formation, leading to fewer primordia and subsequently fewer fruiting bodies (PubMed:33636611).</text>
</comment>
<comment type="similarity">
    <text evidence="6">Belongs to the fungal hydrophobin family.</text>
</comment>
<gene>
    <name evidence="8" type="primary">fbh1</name>
</gene>
<organism>
    <name type="scientific">Pleurotus ostreatus</name>
    <name type="common">Oyster mushroom</name>
    <name type="synonym">White-rot fungus</name>
    <dbReference type="NCBI Taxonomy" id="5322"/>
    <lineage>
        <taxon>Eukaryota</taxon>
        <taxon>Fungi</taxon>
        <taxon>Dikarya</taxon>
        <taxon>Basidiomycota</taxon>
        <taxon>Agaricomycotina</taxon>
        <taxon>Agaricomycetes</taxon>
        <taxon>Agaricomycetidae</taxon>
        <taxon>Agaricales</taxon>
        <taxon>Pleurotineae</taxon>
        <taxon>Pleurotaceae</taxon>
        <taxon>Pleurotus</taxon>
    </lineage>
</organism>
<accession>O60047</accession>
<accession>Q96TR3</accession>
<protein>
    <recommendedName>
        <fullName evidence="5">Fruiting body-specific class I hydrophobin fbh1</fullName>
    </recommendedName>
</protein>
<proteinExistence type="evidence at transcript level"/>
<evidence type="ECO:0000250" key="1">
    <source>
        <dbReference type="UniProtKB" id="Q04571"/>
    </source>
</evidence>
<evidence type="ECO:0000255" key="2"/>
<evidence type="ECO:0000269" key="3">
    <source>
    </source>
</evidence>
<evidence type="ECO:0000269" key="4">
    <source>
    </source>
</evidence>
<evidence type="ECO:0000303" key="5">
    <source>
    </source>
</evidence>
<evidence type="ECO:0000305" key="6"/>
<evidence type="ECO:0000305" key="7">
    <source>
    </source>
</evidence>
<evidence type="ECO:0000312" key="8">
    <source>
        <dbReference type="EMBL" id="CAA06192.1"/>
    </source>
</evidence>
<feature type="signal peptide" evidence="2">
    <location>
        <begin position="1"/>
        <end position="23"/>
    </location>
</feature>
<feature type="chain" id="PRO_5013983467" description="Fruiting body-specific class I hydrophobin fbh1">
    <location>
        <begin position="24"/>
        <end position="113"/>
    </location>
</feature>
<feature type="disulfide bond" evidence="1">
    <location>
        <begin position="33"/>
        <end position="92"/>
    </location>
</feature>
<feature type="disulfide bond" evidence="1">
    <location>
        <begin position="40"/>
        <end position="86"/>
    </location>
</feature>
<feature type="disulfide bond" evidence="1">
    <location>
        <begin position="41"/>
        <end position="73"/>
    </location>
</feature>
<feature type="disulfide bond" evidence="1">
    <location>
        <begin position="93"/>
        <end position="106"/>
    </location>
</feature>
<feature type="sequence conflict" description="In Ref. 2; CAC95144." evidence="6" ref="2">
    <original>ALRPPAR</original>
    <variation>LLAAASP</variation>
    <location>
        <begin position="16"/>
        <end position="22"/>
    </location>
</feature>
<feature type="sequence conflict" description="In Ref. 2; CAC95144." evidence="6" ref="2">
    <original>G</original>
    <variation>A</variation>
    <location>
        <position position="70"/>
    </location>
</feature>